<evidence type="ECO:0000255" key="1">
    <source>
        <dbReference type="HAMAP-Rule" id="MF_01025"/>
    </source>
</evidence>
<comment type="function">
    <text evidence="1">Catalyzes the condensation of the acetyl group of acetyl-CoA with 3-methyl-2-oxobutanoate (2-ketoisovalerate) to form 3-carboxy-3-hydroxy-4-methylpentanoate (2-isopropylmalate).</text>
</comment>
<comment type="catalytic activity">
    <reaction evidence="1">
        <text>3-methyl-2-oxobutanoate + acetyl-CoA + H2O = (2S)-2-isopropylmalate + CoA + H(+)</text>
        <dbReference type="Rhea" id="RHEA:21524"/>
        <dbReference type="ChEBI" id="CHEBI:1178"/>
        <dbReference type="ChEBI" id="CHEBI:11851"/>
        <dbReference type="ChEBI" id="CHEBI:15377"/>
        <dbReference type="ChEBI" id="CHEBI:15378"/>
        <dbReference type="ChEBI" id="CHEBI:57287"/>
        <dbReference type="ChEBI" id="CHEBI:57288"/>
        <dbReference type="EC" id="2.3.3.13"/>
    </reaction>
</comment>
<comment type="cofactor">
    <cofactor evidence="1">
        <name>Mn(2+)</name>
        <dbReference type="ChEBI" id="CHEBI:29035"/>
    </cofactor>
</comment>
<comment type="pathway">
    <text evidence="1">Amino-acid biosynthesis; L-leucine biosynthesis; L-leucine from 3-methyl-2-oxobutanoate: step 1/4.</text>
</comment>
<comment type="subunit">
    <text evidence="1">Homodimer.</text>
</comment>
<comment type="subcellular location">
    <subcellularLocation>
        <location evidence="1">Cytoplasm</location>
    </subcellularLocation>
</comment>
<comment type="similarity">
    <text evidence="1">Belongs to the alpha-IPM synthase/homocitrate synthase family. LeuA type 1 subfamily.</text>
</comment>
<gene>
    <name evidence="1" type="primary">leuA</name>
    <name type="ordered locus">Sama_0335</name>
</gene>
<feature type="chain" id="PRO_1000149277" description="2-isopropylmalate synthase">
    <location>
        <begin position="1"/>
        <end position="522"/>
    </location>
</feature>
<feature type="domain" description="Pyruvate carboxyltransferase" evidence="1">
    <location>
        <begin position="5"/>
        <end position="267"/>
    </location>
</feature>
<feature type="region of interest" description="Regulatory domain" evidence="1">
    <location>
        <begin position="392"/>
        <end position="522"/>
    </location>
</feature>
<feature type="binding site" evidence="1">
    <location>
        <position position="14"/>
    </location>
    <ligand>
        <name>Mn(2+)</name>
        <dbReference type="ChEBI" id="CHEBI:29035"/>
    </ligand>
</feature>
<feature type="binding site" evidence="1">
    <location>
        <position position="202"/>
    </location>
    <ligand>
        <name>Mn(2+)</name>
        <dbReference type="ChEBI" id="CHEBI:29035"/>
    </ligand>
</feature>
<feature type="binding site" evidence="1">
    <location>
        <position position="204"/>
    </location>
    <ligand>
        <name>Mn(2+)</name>
        <dbReference type="ChEBI" id="CHEBI:29035"/>
    </ligand>
</feature>
<feature type="binding site" evidence="1">
    <location>
        <position position="238"/>
    </location>
    <ligand>
        <name>Mn(2+)</name>
        <dbReference type="ChEBI" id="CHEBI:29035"/>
    </ligand>
</feature>
<dbReference type="EC" id="2.3.3.13" evidence="1"/>
<dbReference type="EMBL" id="CP000507">
    <property type="protein sequence ID" value="ABL98546.1"/>
    <property type="molecule type" value="Genomic_DNA"/>
</dbReference>
<dbReference type="RefSeq" id="WP_011758456.1">
    <property type="nucleotide sequence ID" value="NC_008700.1"/>
</dbReference>
<dbReference type="SMR" id="A1S2E0"/>
<dbReference type="STRING" id="326297.Sama_0335"/>
<dbReference type="KEGG" id="saz:Sama_0335"/>
<dbReference type="eggNOG" id="COG0119">
    <property type="taxonomic scope" value="Bacteria"/>
</dbReference>
<dbReference type="HOGENOM" id="CLU_022158_0_1_6"/>
<dbReference type="OrthoDB" id="9803573at2"/>
<dbReference type="UniPathway" id="UPA00048">
    <property type="reaction ID" value="UER00070"/>
</dbReference>
<dbReference type="Proteomes" id="UP000009175">
    <property type="component" value="Chromosome"/>
</dbReference>
<dbReference type="GO" id="GO:0005829">
    <property type="term" value="C:cytosol"/>
    <property type="evidence" value="ECO:0007669"/>
    <property type="project" value="TreeGrafter"/>
</dbReference>
<dbReference type="GO" id="GO:0003852">
    <property type="term" value="F:2-isopropylmalate synthase activity"/>
    <property type="evidence" value="ECO:0007669"/>
    <property type="project" value="UniProtKB-UniRule"/>
</dbReference>
<dbReference type="GO" id="GO:0003985">
    <property type="term" value="F:acetyl-CoA C-acetyltransferase activity"/>
    <property type="evidence" value="ECO:0007669"/>
    <property type="project" value="UniProtKB-UniRule"/>
</dbReference>
<dbReference type="GO" id="GO:0030145">
    <property type="term" value="F:manganese ion binding"/>
    <property type="evidence" value="ECO:0007669"/>
    <property type="project" value="UniProtKB-UniRule"/>
</dbReference>
<dbReference type="GO" id="GO:0009098">
    <property type="term" value="P:L-leucine biosynthetic process"/>
    <property type="evidence" value="ECO:0007669"/>
    <property type="project" value="UniProtKB-UniRule"/>
</dbReference>
<dbReference type="CDD" id="cd07940">
    <property type="entry name" value="DRE_TIM_IPMS"/>
    <property type="match status" value="1"/>
</dbReference>
<dbReference type="FunFam" id="1.10.238.260:FF:000001">
    <property type="entry name" value="2-isopropylmalate synthase"/>
    <property type="match status" value="1"/>
</dbReference>
<dbReference type="FunFam" id="3.20.20.70:FF:000010">
    <property type="entry name" value="2-isopropylmalate synthase"/>
    <property type="match status" value="1"/>
</dbReference>
<dbReference type="FunFam" id="3.30.160.270:FF:000001">
    <property type="entry name" value="2-isopropylmalate synthase"/>
    <property type="match status" value="1"/>
</dbReference>
<dbReference type="Gene3D" id="1.10.238.260">
    <property type="match status" value="1"/>
</dbReference>
<dbReference type="Gene3D" id="3.30.160.270">
    <property type="match status" value="1"/>
</dbReference>
<dbReference type="Gene3D" id="3.20.20.70">
    <property type="entry name" value="Aldolase class I"/>
    <property type="match status" value="1"/>
</dbReference>
<dbReference type="HAMAP" id="MF_01025">
    <property type="entry name" value="LeuA_type1"/>
    <property type="match status" value="1"/>
</dbReference>
<dbReference type="InterPro" id="IPR050073">
    <property type="entry name" value="2-IPM_HCS-like"/>
</dbReference>
<dbReference type="InterPro" id="IPR013709">
    <property type="entry name" value="2-isopropylmalate_synth_dimer"/>
</dbReference>
<dbReference type="InterPro" id="IPR002034">
    <property type="entry name" value="AIPM/Hcit_synth_CS"/>
</dbReference>
<dbReference type="InterPro" id="IPR013785">
    <property type="entry name" value="Aldolase_TIM"/>
</dbReference>
<dbReference type="InterPro" id="IPR054691">
    <property type="entry name" value="LeuA/HCS_post-cat"/>
</dbReference>
<dbReference type="InterPro" id="IPR036230">
    <property type="entry name" value="LeuA_allosteric_dom_sf"/>
</dbReference>
<dbReference type="InterPro" id="IPR005671">
    <property type="entry name" value="LeuA_bact_synth"/>
</dbReference>
<dbReference type="InterPro" id="IPR000891">
    <property type="entry name" value="PYR_CT"/>
</dbReference>
<dbReference type="NCBIfam" id="TIGR00973">
    <property type="entry name" value="leuA_bact"/>
    <property type="match status" value="1"/>
</dbReference>
<dbReference type="NCBIfam" id="NF002084">
    <property type="entry name" value="PRK00915.1-1"/>
    <property type="match status" value="1"/>
</dbReference>
<dbReference type="NCBIfam" id="NF002086">
    <property type="entry name" value="PRK00915.1-3"/>
    <property type="match status" value="1"/>
</dbReference>
<dbReference type="PANTHER" id="PTHR10277:SF9">
    <property type="entry name" value="2-ISOPROPYLMALATE SYNTHASE 1, CHLOROPLASTIC-RELATED"/>
    <property type="match status" value="1"/>
</dbReference>
<dbReference type="PANTHER" id="PTHR10277">
    <property type="entry name" value="HOMOCITRATE SYNTHASE-RELATED"/>
    <property type="match status" value="1"/>
</dbReference>
<dbReference type="Pfam" id="PF22617">
    <property type="entry name" value="HCS_D2"/>
    <property type="match status" value="1"/>
</dbReference>
<dbReference type="Pfam" id="PF00682">
    <property type="entry name" value="HMGL-like"/>
    <property type="match status" value="1"/>
</dbReference>
<dbReference type="Pfam" id="PF08502">
    <property type="entry name" value="LeuA_dimer"/>
    <property type="match status" value="1"/>
</dbReference>
<dbReference type="SMART" id="SM00917">
    <property type="entry name" value="LeuA_dimer"/>
    <property type="match status" value="1"/>
</dbReference>
<dbReference type="SUPFAM" id="SSF110921">
    <property type="entry name" value="2-isopropylmalate synthase LeuA, allosteric (dimerisation) domain"/>
    <property type="match status" value="1"/>
</dbReference>
<dbReference type="SUPFAM" id="SSF51569">
    <property type="entry name" value="Aldolase"/>
    <property type="match status" value="1"/>
</dbReference>
<dbReference type="PROSITE" id="PS00815">
    <property type="entry name" value="AIPM_HOMOCIT_SYNTH_1"/>
    <property type="match status" value="1"/>
</dbReference>
<dbReference type="PROSITE" id="PS00816">
    <property type="entry name" value="AIPM_HOMOCIT_SYNTH_2"/>
    <property type="match status" value="1"/>
</dbReference>
<dbReference type="PROSITE" id="PS50991">
    <property type="entry name" value="PYR_CT"/>
    <property type="match status" value="1"/>
</dbReference>
<protein>
    <recommendedName>
        <fullName evidence="1">2-isopropylmalate synthase</fullName>
        <ecNumber evidence="1">2.3.3.13</ecNumber>
    </recommendedName>
    <alternativeName>
        <fullName evidence="1">Alpha-IPM synthase</fullName>
    </alternativeName>
    <alternativeName>
        <fullName evidence="1">Alpha-isopropylmalate synthase</fullName>
    </alternativeName>
</protein>
<reference key="1">
    <citation type="submission" date="2006-12" db="EMBL/GenBank/DDBJ databases">
        <title>Complete sequence of Shewanella amazonensis SB2B.</title>
        <authorList>
            <consortium name="US DOE Joint Genome Institute"/>
            <person name="Copeland A."/>
            <person name="Lucas S."/>
            <person name="Lapidus A."/>
            <person name="Barry K."/>
            <person name="Detter J.C."/>
            <person name="Glavina del Rio T."/>
            <person name="Hammon N."/>
            <person name="Israni S."/>
            <person name="Dalin E."/>
            <person name="Tice H."/>
            <person name="Pitluck S."/>
            <person name="Munk A.C."/>
            <person name="Brettin T."/>
            <person name="Bruce D."/>
            <person name="Han C."/>
            <person name="Tapia R."/>
            <person name="Gilna P."/>
            <person name="Schmutz J."/>
            <person name="Larimer F."/>
            <person name="Land M."/>
            <person name="Hauser L."/>
            <person name="Kyrpides N."/>
            <person name="Mikhailova N."/>
            <person name="Fredrickson J."/>
            <person name="Richardson P."/>
        </authorList>
    </citation>
    <scope>NUCLEOTIDE SEQUENCE [LARGE SCALE GENOMIC DNA]</scope>
    <source>
        <strain>ATCC BAA-1098 / SB2B</strain>
    </source>
</reference>
<accession>A1S2E0</accession>
<proteinExistence type="inferred from homology"/>
<keyword id="KW-0028">Amino-acid biosynthesis</keyword>
<keyword id="KW-0100">Branched-chain amino acid biosynthesis</keyword>
<keyword id="KW-0963">Cytoplasm</keyword>
<keyword id="KW-0432">Leucine biosynthesis</keyword>
<keyword id="KW-0464">Manganese</keyword>
<keyword id="KW-0479">Metal-binding</keyword>
<keyword id="KW-1185">Reference proteome</keyword>
<keyword id="KW-0808">Transferase</keyword>
<name>LEU1_SHEAM</name>
<organism>
    <name type="scientific">Shewanella amazonensis (strain ATCC BAA-1098 / SB2B)</name>
    <dbReference type="NCBI Taxonomy" id="326297"/>
    <lineage>
        <taxon>Bacteria</taxon>
        <taxon>Pseudomonadati</taxon>
        <taxon>Pseudomonadota</taxon>
        <taxon>Gammaproteobacteria</taxon>
        <taxon>Alteromonadales</taxon>
        <taxon>Shewanellaceae</taxon>
        <taxon>Shewanella</taxon>
    </lineage>
</organism>
<sequence>MSDRVIIFDTTLRDGEQALAASLSVKEKLQVALALERLGVDVMEVGFPVSSPGDFESVQTIARHIKNSRVCALSRALEKDIDAAAQALSVAEQFRIHTFISTSNIHVESKLKRSFDQVLDMAVGAVKYARRFTDDVEFSCEDAGRTPIDNLCRMVEAAISAGARTINIPDTVGYTVPSEFGGIIQTLFNRVPNIDQAVISVHCHDDLGLSVANSIAAVQAGARQIECTVNGIGERAGNCSLEEIAMILATRKDMLGLYTNINAREIHRTSSLVSQLCNMPIQPNKAIVGSNAFTHSSGIHQDGMLKAQNTYEIMTPESIGLNRNNLNMTSRSGRHVIKHRMEEMGYGAGDYDMDTLYAAFLKLADKKGQVFDYDLEALAFMEAQAEDDDHYVMEQLVVQSDSTEGKATATVRMRVGDEVITEAATGNGPVDAAYNAIARATHRTINISSYKLGAKGEGQNALGQVDITARYDDRNFHGVGLATDVVEASAQALVHVMNLTWRADKVAYCKQQMQQTRELGGV</sequence>